<organism>
    <name type="scientific">Caldanaerobacter subterraneus subsp. tengcongensis (strain DSM 15242 / JCM 11007 / NBRC 100824 / MB4)</name>
    <name type="common">Thermoanaerobacter tengcongensis</name>
    <dbReference type="NCBI Taxonomy" id="273068"/>
    <lineage>
        <taxon>Bacteria</taxon>
        <taxon>Bacillati</taxon>
        <taxon>Bacillota</taxon>
        <taxon>Clostridia</taxon>
        <taxon>Thermoanaerobacterales</taxon>
        <taxon>Thermoanaerobacteraceae</taxon>
        <taxon>Caldanaerobacter</taxon>
    </lineage>
</organism>
<accession>Q8R9J6</accession>
<reference key="1">
    <citation type="journal article" date="2002" name="Genome Res.">
        <title>A complete sequence of the T. tengcongensis genome.</title>
        <authorList>
            <person name="Bao Q."/>
            <person name="Tian Y."/>
            <person name="Li W."/>
            <person name="Xu Z."/>
            <person name="Xuan Z."/>
            <person name="Hu S."/>
            <person name="Dong W."/>
            <person name="Yang J."/>
            <person name="Chen Y."/>
            <person name="Xue Y."/>
            <person name="Xu Y."/>
            <person name="Lai X."/>
            <person name="Huang L."/>
            <person name="Dong X."/>
            <person name="Ma Y."/>
            <person name="Ling L."/>
            <person name="Tan H."/>
            <person name="Chen R."/>
            <person name="Wang J."/>
            <person name="Yu J."/>
            <person name="Yang H."/>
        </authorList>
    </citation>
    <scope>NUCLEOTIDE SEQUENCE [LARGE SCALE GENOMIC DNA]</scope>
    <source>
        <strain>DSM 15242 / JCM 11007 / NBRC 100824 / MB4</strain>
    </source>
</reference>
<proteinExistence type="inferred from homology"/>
<dbReference type="EC" id="3.4.19.3" evidence="1"/>
<dbReference type="EMBL" id="AE008691">
    <property type="protein sequence ID" value="AAM24815.1"/>
    <property type="molecule type" value="Genomic_DNA"/>
</dbReference>
<dbReference type="SMR" id="Q8R9J6"/>
<dbReference type="STRING" id="273068.TTE1612"/>
<dbReference type="MEROPS" id="C15.001"/>
<dbReference type="KEGG" id="tte:TTE1612"/>
<dbReference type="eggNOG" id="COG2039">
    <property type="taxonomic scope" value="Bacteria"/>
</dbReference>
<dbReference type="HOGENOM" id="CLU_043960_4_0_9"/>
<dbReference type="OrthoDB" id="9779738at2"/>
<dbReference type="Proteomes" id="UP000000555">
    <property type="component" value="Chromosome"/>
</dbReference>
<dbReference type="GO" id="GO:0005829">
    <property type="term" value="C:cytosol"/>
    <property type="evidence" value="ECO:0007669"/>
    <property type="project" value="InterPro"/>
</dbReference>
<dbReference type="GO" id="GO:0016920">
    <property type="term" value="F:pyroglutamyl-peptidase activity"/>
    <property type="evidence" value="ECO:0007669"/>
    <property type="project" value="UniProtKB-UniRule"/>
</dbReference>
<dbReference type="GO" id="GO:0006508">
    <property type="term" value="P:proteolysis"/>
    <property type="evidence" value="ECO:0007669"/>
    <property type="project" value="UniProtKB-KW"/>
</dbReference>
<dbReference type="CDD" id="cd00501">
    <property type="entry name" value="Peptidase_C15"/>
    <property type="match status" value="1"/>
</dbReference>
<dbReference type="FunFam" id="3.40.630.20:FF:000001">
    <property type="entry name" value="Pyrrolidone-carboxylate peptidase"/>
    <property type="match status" value="1"/>
</dbReference>
<dbReference type="Gene3D" id="3.40.630.20">
    <property type="entry name" value="Peptidase C15, pyroglutamyl peptidase I-like"/>
    <property type="match status" value="1"/>
</dbReference>
<dbReference type="HAMAP" id="MF_00417">
    <property type="entry name" value="Pyrrolid_peptidase"/>
    <property type="match status" value="1"/>
</dbReference>
<dbReference type="InterPro" id="IPR000816">
    <property type="entry name" value="Peptidase_C15"/>
</dbReference>
<dbReference type="InterPro" id="IPR016125">
    <property type="entry name" value="Peptidase_C15-like"/>
</dbReference>
<dbReference type="InterPro" id="IPR036440">
    <property type="entry name" value="Peptidase_C15-like_sf"/>
</dbReference>
<dbReference type="InterPro" id="IPR029762">
    <property type="entry name" value="PGP-I_bact-type"/>
</dbReference>
<dbReference type="InterPro" id="IPR033694">
    <property type="entry name" value="PGPEP1_Cys_AS"/>
</dbReference>
<dbReference type="InterPro" id="IPR033693">
    <property type="entry name" value="PGPEP1_Glu_AS"/>
</dbReference>
<dbReference type="NCBIfam" id="NF009676">
    <property type="entry name" value="PRK13197.1"/>
    <property type="match status" value="1"/>
</dbReference>
<dbReference type="NCBIfam" id="TIGR00504">
    <property type="entry name" value="pyro_pdase"/>
    <property type="match status" value="1"/>
</dbReference>
<dbReference type="PANTHER" id="PTHR23402">
    <property type="entry name" value="PROTEASE FAMILY C15 PYROGLUTAMYL-PEPTIDASE I-RELATED"/>
    <property type="match status" value="1"/>
</dbReference>
<dbReference type="PANTHER" id="PTHR23402:SF1">
    <property type="entry name" value="PYROGLUTAMYL-PEPTIDASE I"/>
    <property type="match status" value="1"/>
</dbReference>
<dbReference type="Pfam" id="PF01470">
    <property type="entry name" value="Peptidase_C15"/>
    <property type="match status" value="1"/>
</dbReference>
<dbReference type="PIRSF" id="PIRSF015592">
    <property type="entry name" value="Prld-crbxl_pptds"/>
    <property type="match status" value="1"/>
</dbReference>
<dbReference type="PRINTS" id="PR00706">
    <property type="entry name" value="PYROGLUPTASE"/>
</dbReference>
<dbReference type="SUPFAM" id="SSF53182">
    <property type="entry name" value="Pyrrolidone carboxyl peptidase (pyroglutamate aminopeptidase)"/>
    <property type="match status" value="1"/>
</dbReference>
<dbReference type="PROSITE" id="PS01334">
    <property type="entry name" value="PYRASE_CYS"/>
    <property type="match status" value="1"/>
</dbReference>
<dbReference type="PROSITE" id="PS01333">
    <property type="entry name" value="PYRASE_GLU"/>
    <property type="match status" value="1"/>
</dbReference>
<comment type="function">
    <text evidence="1">Removes 5-oxoproline from various penultimate amino acid residues except L-proline.</text>
</comment>
<comment type="catalytic activity">
    <reaction evidence="1">
        <text>Release of an N-terminal pyroglutamyl group from a polypeptide, the second amino acid generally not being Pro.</text>
        <dbReference type="EC" id="3.4.19.3"/>
    </reaction>
</comment>
<comment type="subunit">
    <text evidence="1">Homotetramer.</text>
</comment>
<comment type="subcellular location">
    <subcellularLocation>
        <location evidence="1">Cytoplasm</location>
    </subcellularLocation>
</comment>
<comment type="similarity">
    <text evidence="1">Belongs to the peptidase C15 family.</text>
</comment>
<gene>
    <name evidence="1" type="primary">pcp2</name>
    <name type="ordered locus">TTE1612</name>
</gene>
<sequence length="206" mass="22617">MKILVTAFDPFGGESINPSYEVLKNLKDNIEGAEIVKIQVPTVFYLSVEKAIEKIKEVNPDAVLSIGQAGGRYDISVERVAINIDDARIPDNIGQQPIDTPIDPEGAPAYFATIPIKEIVEEIKKENIPASISNTAGTYVCNHLMYGILNYIHKNKLNIKAGFIHIPYLPVQVLNKPSTPSMSLGDMVKAIETAIKVIVKSCKKSR</sequence>
<protein>
    <recommendedName>
        <fullName evidence="1">Pyrrolidone-carboxylate peptidase 2</fullName>
        <ecNumber evidence="1">3.4.19.3</ecNumber>
    </recommendedName>
    <alternativeName>
        <fullName evidence="1">5-oxoprolyl-peptidase 2</fullName>
    </alternativeName>
    <alternativeName>
        <fullName evidence="1">Pyroglutamyl-peptidase I 2</fullName>
        <shortName evidence="1">PGP-I 2</shortName>
        <shortName evidence="1">Pyrase 2</shortName>
    </alternativeName>
</protein>
<feature type="chain" id="PRO_0000184747" description="Pyrrolidone-carboxylate peptidase 2">
    <location>
        <begin position="1"/>
        <end position="206"/>
    </location>
</feature>
<feature type="active site" evidence="1">
    <location>
        <position position="78"/>
    </location>
</feature>
<feature type="active site" evidence="1">
    <location>
        <position position="141"/>
    </location>
</feature>
<feature type="active site" evidence="1">
    <location>
        <position position="165"/>
    </location>
</feature>
<keyword id="KW-0963">Cytoplasm</keyword>
<keyword id="KW-0378">Hydrolase</keyword>
<keyword id="KW-0645">Protease</keyword>
<keyword id="KW-1185">Reference proteome</keyword>
<keyword id="KW-0788">Thiol protease</keyword>
<evidence type="ECO:0000255" key="1">
    <source>
        <dbReference type="HAMAP-Rule" id="MF_00417"/>
    </source>
</evidence>
<name>PCP2_CALS4</name>